<organism>
    <name type="scientific">Trypanosoma brucei brucei (strain 927/4 GUTat10.1)</name>
    <dbReference type="NCBI Taxonomy" id="185431"/>
    <lineage>
        <taxon>Eukaryota</taxon>
        <taxon>Discoba</taxon>
        <taxon>Euglenozoa</taxon>
        <taxon>Kinetoplastea</taxon>
        <taxon>Metakinetoplastina</taxon>
        <taxon>Trypanosomatida</taxon>
        <taxon>Trypanosomatidae</taxon>
        <taxon>Trypanosoma</taxon>
    </lineage>
</organism>
<evidence type="ECO:0000250" key="1"/>
<evidence type="ECO:0000250" key="2">
    <source>
        <dbReference type="UniProtKB" id="B3A0M2"/>
    </source>
</evidence>
<evidence type="ECO:0000255" key="3"/>
<evidence type="ECO:0000312" key="4">
    <source>
        <dbReference type="EMBL" id="EAN76914.1"/>
    </source>
</evidence>
<evidence type="ECO:0000312" key="5">
    <source>
        <dbReference type="Proteomes" id="UP000008524"/>
    </source>
</evidence>
<feature type="chain" id="PRO_0000413857" description="Phosphatidylcholine:ceramide cholinephosphotransferase 4">
    <location>
        <begin position="1"/>
        <end position="365"/>
    </location>
</feature>
<feature type="topological domain" description="Cytoplasmic" evidence="3">
    <location>
        <begin position="1"/>
        <end position="44"/>
    </location>
</feature>
<feature type="transmembrane region" description="Helical" evidence="3">
    <location>
        <begin position="45"/>
        <end position="65"/>
    </location>
</feature>
<feature type="topological domain" description="Lumenal" evidence="3">
    <location>
        <begin position="66"/>
        <end position="92"/>
    </location>
</feature>
<feature type="transmembrane region" description="Helical" evidence="3">
    <location>
        <begin position="93"/>
        <end position="113"/>
    </location>
</feature>
<feature type="topological domain" description="Cytoplasmic" evidence="3">
    <location>
        <begin position="114"/>
        <end position="165"/>
    </location>
</feature>
<feature type="transmembrane region" description="Helical" evidence="3">
    <location>
        <begin position="166"/>
        <end position="186"/>
    </location>
</feature>
<feature type="topological domain" description="Lumenal" evidence="3">
    <location>
        <begin position="187"/>
        <end position="229"/>
    </location>
</feature>
<feature type="transmembrane region" description="Helical" evidence="3">
    <location>
        <begin position="230"/>
        <end position="250"/>
    </location>
</feature>
<feature type="topological domain" description="Cytoplasmic" evidence="3">
    <location>
        <position position="251"/>
    </location>
</feature>
<feature type="transmembrane region" description="Helical" evidence="3">
    <location>
        <begin position="252"/>
        <end position="272"/>
    </location>
</feature>
<feature type="topological domain" description="Lumenal" evidence="3">
    <location>
        <begin position="273"/>
        <end position="275"/>
    </location>
</feature>
<feature type="transmembrane region" description="Helical" evidence="3">
    <location>
        <begin position="276"/>
        <end position="296"/>
    </location>
</feature>
<feature type="topological domain" description="Cytoplasmic" evidence="3">
    <location>
        <begin position="297"/>
        <end position="365"/>
    </location>
</feature>
<feature type="active site" evidence="1">
    <location>
        <position position="228"/>
    </location>
</feature>
<feature type="active site" evidence="1">
    <location>
        <position position="271"/>
    </location>
</feature>
<feature type="active site" evidence="1">
    <location>
        <position position="275"/>
    </location>
</feature>
<gene>
    <name evidence="2" type="primary">SLS4</name>
    <name type="ORF">Tb09.211.1000</name>
</gene>
<proteinExistence type="inferred from homology"/>
<keyword id="KW-0333">Golgi apparatus</keyword>
<keyword id="KW-0418">Kinase</keyword>
<keyword id="KW-0443">Lipid metabolism</keyword>
<keyword id="KW-0472">Membrane</keyword>
<keyword id="KW-1185">Reference proteome</keyword>
<keyword id="KW-0746">Sphingolipid metabolism</keyword>
<keyword id="KW-0808">Transferase</keyword>
<keyword id="KW-0812">Transmembrane</keyword>
<keyword id="KW-1133">Transmembrane helix</keyword>
<dbReference type="EC" id="2.7.8.27" evidence="2"/>
<dbReference type="EMBL" id="CM000207">
    <property type="protein sequence ID" value="EAN76914.1"/>
    <property type="molecule type" value="Genomic_DNA"/>
</dbReference>
<dbReference type="RefSeq" id="XP_827244.1">
    <property type="nucleotide sequence ID" value="XM_822151.1"/>
</dbReference>
<dbReference type="STRING" id="185431.Q38E56"/>
<dbReference type="PaxDb" id="5691-EAN76914"/>
<dbReference type="GeneID" id="3660633"/>
<dbReference type="KEGG" id="tbr:Tb09.211.1000"/>
<dbReference type="eggNOG" id="KOG3058">
    <property type="taxonomic scope" value="Eukaryota"/>
</dbReference>
<dbReference type="InParanoid" id="Q38E56"/>
<dbReference type="OMA" id="LIVWIRY"/>
<dbReference type="OrthoDB" id="422827at2759"/>
<dbReference type="Proteomes" id="UP000008524">
    <property type="component" value="Chromosome 9"/>
</dbReference>
<dbReference type="GO" id="GO:0005789">
    <property type="term" value="C:endoplasmic reticulum membrane"/>
    <property type="evidence" value="ECO:0000318"/>
    <property type="project" value="GO_Central"/>
</dbReference>
<dbReference type="GO" id="GO:0005794">
    <property type="term" value="C:Golgi apparatus"/>
    <property type="evidence" value="ECO:0000269"/>
    <property type="project" value="GeneDB"/>
</dbReference>
<dbReference type="GO" id="GO:0000139">
    <property type="term" value="C:Golgi membrane"/>
    <property type="evidence" value="ECO:0000318"/>
    <property type="project" value="GO_Central"/>
</dbReference>
<dbReference type="GO" id="GO:0016020">
    <property type="term" value="C:membrane"/>
    <property type="evidence" value="ECO:0000247"/>
    <property type="project" value="GeneDB"/>
</dbReference>
<dbReference type="GO" id="GO:0005886">
    <property type="term" value="C:plasma membrane"/>
    <property type="evidence" value="ECO:0000318"/>
    <property type="project" value="GO_Central"/>
</dbReference>
<dbReference type="GO" id="GO:0047493">
    <property type="term" value="F:ceramide cholinephosphotransferase activity"/>
    <property type="evidence" value="ECO:0000247"/>
    <property type="project" value="GeneDB"/>
</dbReference>
<dbReference type="GO" id="GO:0004307">
    <property type="term" value="F:ethanolaminephosphotransferase activity"/>
    <property type="evidence" value="ECO:0000314"/>
    <property type="project" value="GeneDB"/>
</dbReference>
<dbReference type="GO" id="GO:0016301">
    <property type="term" value="F:kinase activity"/>
    <property type="evidence" value="ECO:0007669"/>
    <property type="project" value="UniProtKB-KW"/>
</dbReference>
<dbReference type="GO" id="GO:0033188">
    <property type="term" value="F:sphingomyelin synthase activity"/>
    <property type="evidence" value="ECO:0000318"/>
    <property type="project" value="GO_Central"/>
</dbReference>
<dbReference type="GO" id="GO:0046513">
    <property type="term" value="P:ceramide biosynthetic process"/>
    <property type="evidence" value="ECO:0000314"/>
    <property type="project" value="GeneDB"/>
</dbReference>
<dbReference type="GO" id="GO:0006686">
    <property type="term" value="P:sphingomyelin biosynthetic process"/>
    <property type="evidence" value="ECO:0000269"/>
    <property type="project" value="GeneDB"/>
</dbReference>
<dbReference type="InterPro" id="IPR045221">
    <property type="entry name" value="Sphingomyelin_synth-like"/>
</dbReference>
<dbReference type="InterPro" id="IPR025749">
    <property type="entry name" value="Sphingomyelin_synth-like_dom"/>
</dbReference>
<dbReference type="PANTHER" id="PTHR21290:SF25">
    <property type="entry name" value="SPHINGOMYELIN SYNTHASE-RELATED PROTEIN 1"/>
    <property type="match status" value="1"/>
</dbReference>
<dbReference type="PANTHER" id="PTHR21290">
    <property type="entry name" value="SPHINGOMYELIN SYNTHETASE"/>
    <property type="match status" value="1"/>
</dbReference>
<dbReference type="Pfam" id="PF14360">
    <property type="entry name" value="PAP2_C"/>
    <property type="match status" value="1"/>
</dbReference>
<protein>
    <recommendedName>
        <fullName evidence="2">Phosphatidylcholine:ceramide cholinephosphotransferase 4</fullName>
        <ecNumber evidence="2">2.7.8.27</ecNumber>
    </recommendedName>
    <alternativeName>
        <fullName evidence="2">Ethanolamine-phosphorylceramide synthase</fullName>
        <shortName evidence="2">EPC synthase</shortName>
    </alternativeName>
    <alternativeName>
        <fullName evidence="2">Sphingolipid synthase</fullName>
    </alternativeName>
    <alternativeName>
        <fullName evidence="2">Sphingomyelin synthase</fullName>
        <shortName evidence="2">SM synthase</shortName>
    </alternativeName>
</protein>
<accession>Q38E56</accession>
<sequence>MISYPFFSLSPPGLVPPPMAVPPVEMYSGSFWNRMRKPLPLRTQVIRFTVVFVIVSFILAVALQITHERMPDPKVTKPLPDLGFELLTKVPGMYVLADCCIGFLNILSVFTAFKLYLLHRHCVGSGEPELPCNIPGVSRFFLSVWLCKENCRIELRNVHTIAWIRFITSYALLLLFRSVVIVMTSLPAPDDLCQDPPKIENPVKNVILTVLTAGGGSIHCGDLMYSGHTVILTLHLMFHWIYGAMVHWSFRPVVTVVAIFGYYCIVASRFHYTDDVLVAIYLTIATFIAVGHNADGAPWQLQLFIRWLPCCGANSREMTEDSQPVMVAFKSEELDEMNGVLEGRQKKHGGVGDGEALMFKCGAYV</sequence>
<comment type="function">
    <text evidence="1">Bidirectional lipid cholinephosphotransferase capable of converting phosphatidylcholine (PC) and ceramide to sphingomyelin (SM) and diacylglycerol (DAG) and vice versa. Direction is dependent on the relative concentrations of DAG and ceramide as phosphocholine acceptors. Directly and specifically recognizes the choline head group on the substrate. Also requires two fatty chains on the choline-P donor molecule in order to be recognized efficiently as a substrate. Does not function strictly as a SM synthase. Essential for viability of the pathogenic bloodstream stage of this human protozoan parasite and, consequently, can be considered as potential drug target (By similarity).</text>
</comment>
<comment type="catalytic activity">
    <reaction evidence="2">
        <text>an N-acylsphing-4-enine + a 1,2-diacyl-sn-glycero-3-phosphocholine = a sphingomyelin + a 1,2-diacyl-sn-glycerol</text>
        <dbReference type="Rhea" id="RHEA:18765"/>
        <dbReference type="ChEBI" id="CHEBI:17636"/>
        <dbReference type="ChEBI" id="CHEBI:17815"/>
        <dbReference type="ChEBI" id="CHEBI:52639"/>
        <dbReference type="ChEBI" id="CHEBI:57643"/>
        <dbReference type="EC" id="2.7.8.27"/>
    </reaction>
</comment>
<comment type="subcellular location">
    <subcellularLocation>
        <location evidence="2">Golgi apparatus membrane</location>
        <topology evidence="2">Multi-pass membrane protein</topology>
    </subcellularLocation>
</comment>
<comment type="similarity">
    <text evidence="3">Belongs to the sphingomyelin synthase family.</text>
</comment>
<name>SLS4_TRYB2</name>
<reference evidence="4" key="1">
    <citation type="journal article" date="2005" name="Science">
        <title>The genome of the African trypanosome Trypanosoma brucei.</title>
        <authorList>
            <person name="Berriman M."/>
            <person name="Ghedin E."/>
            <person name="Hertz-Fowler C."/>
            <person name="Blandin G."/>
            <person name="Renauld H."/>
            <person name="Bartholomeu D.C."/>
            <person name="Lennard N.J."/>
            <person name="Caler E."/>
            <person name="Hamlin N.E."/>
            <person name="Haas B."/>
            <person name="Bohme U."/>
            <person name="Hannick L."/>
            <person name="Aslett M.A."/>
            <person name="Shallom J."/>
            <person name="Marcello L."/>
            <person name="Hou L."/>
            <person name="Wickstead B."/>
            <person name="Alsmark U.C.M."/>
            <person name="Arrowsmith C."/>
            <person name="Atkin R.J."/>
            <person name="Barron A.J."/>
            <person name="Bringaud F."/>
            <person name="Brooks K."/>
            <person name="Carrington M."/>
            <person name="Cherevach I."/>
            <person name="Chillingworth T.J."/>
            <person name="Churcher C."/>
            <person name="Clark L.N."/>
            <person name="Corton C.H."/>
            <person name="Cronin A."/>
            <person name="Davies R.M."/>
            <person name="Doggett J."/>
            <person name="Djikeng A."/>
            <person name="Feldblyum T."/>
            <person name="Field M.C."/>
            <person name="Fraser A."/>
            <person name="Goodhead I."/>
            <person name="Hance Z."/>
            <person name="Harper D."/>
            <person name="Harris B.R."/>
            <person name="Hauser H."/>
            <person name="Hostetler J."/>
            <person name="Ivens A."/>
            <person name="Jagels K."/>
            <person name="Johnson D."/>
            <person name="Johnson J."/>
            <person name="Jones K."/>
            <person name="Kerhornou A.X."/>
            <person name="Koo H."/>
            <person name="Larke N."/>
            <person name="Landfear S."/>
            <person name="Larkin C."/>
            <person name="Leech V."/>
            <person name="Line A."/>
            <person name="Lord A."/>
            <person name="Macleod A."/>
            <person name="Mooney P.J."/>
            <person name="Moule S."/>
            <person name="Martin D.M."/>
            <person name="Morgan G.W."/>
            <person name="Mungall K."/>
            <person name="Norbertczak H."/>
            <person name="Ormond D."/>
            <person name="Pai G."/>
            <person name="Peacock C.S."/>
            <person name="Peterson J."/>
            <person name="Quail M.A."/>
            <person name="Rabbinowitsch E."/>
            <person name="Rajandream M.A."/>
            <person name="Reitter C."/>
            <person name="Salzberg S.L."/>
            <person name="Sanders M."/>
            <person name="Schobel S."/>
            <person name="Sharp S."/>
            <person name="Simmonds M."/>
            <person name="Simpson A.J."/>
            <person name="Tallon L."/>
            <person name="Turner C.M."/>
            <person name="Tait A."/>
            <person name="Tivey A.R."/>
            <person name="Van Aken S."/>
            <person name="Walker D."/>
            <person name="Wanless D."/>
            <person name="Wang S."/>
            <person name="White B."/>
            <person name="White O."/>
            <person name="Whitehead S."/>
            <person name="Woodward J."/>
            <person name="Wortman J."/>
            <person name="Adams M.D."/>
            <person name="Embley T.M."/>
            <person name="Gull K."/>
            <person name="Ullu E."/>
            <person name="Barry J.D."/>
            <person name="Fairlamb A.H."/>
            <person name="Opperdoes F."/>
            <person name="Barrell B.G."/>
            <person name="Donelson J.E."/>
            <person name="Hall N."/>
            <person name="Fraser C.M."/>
            <person name="Melville S.E."/>
            <person name="El-Sayed N.M.A."/>
        </authorList>
    </citation>
    <scope>NUCLEOTIDE SEQUENCE [LARGE SCALE GENOMIC DNA]</scope>
    <source>
        <strain evidence="5">927/4 GUTat10.1</strain>
    </source>
</reference>